<name>TPS7_DICDI</name>
<gene>
    <name evidence="3" type="primary">TPS7</name>
    <name type="ORF">DDB0218081</name>
</gene>
<dbReference type="EC" id="4.2.3.-" evidence="2"/>
<dbReference type="EMBL" id="KX364380">
    <property type="protein sequence ID" value="APC23391.1"/>
    <property type="molecule type" value="mRNA"/>
</dbReference>
<dbReference type="EMBL" id="AAFI01000052">
    <property type="protein sequence ID" value="EAL68496.1"/>
    <property type="molecule type" value="Genomic_DNA"/>
</dbReference>
<dbReference type="RefSeq" id="XP_642261.1">
    <property type="nucleotide sequence ID" value="XM_637169.1"/>
</dbReference>
<dbReference type="SMR" id="Q54YE1"/>
<dbReference type="PaxDb" id="44689-DDB0218081"/>
<dbReference type="KEGG" id="ddi:DDB_G0278647"/>
<dbReference type="dictyBase" id="DDB_G0278647">
    <property type="gene designation" value="tps7"/>
</dbReference>
<dbReference type="VEuPathDB" id="AmoebaDB:DDB_G0278647"/>
<dbReference type="HOGENOM" id="CLU_070708_0_0_1"/>
<dbReference type="InParanoid" id="Q54YE1"/>
<dbReference type="OMA" id="AIEMNIY"/>
<dbReference type="PRO" id="PR:Q54YE1"/>
<dbReference type="GO" id="GO:0102881">
    <property type="term" value="F:(+)-beta-barbatene synthase activity"/>
    <property type="evidence" value="ECO:0000314"/>
    <property type="project" value="dictyBase"/>
</dbReference>
<dbReference type="GO" id="GO:0046872">
    <property type="term" value="F:metal ion binding"/>
    <property type="evidence" value="ECO:0007669"/>
    <property type="project" value="UniProtKB-KW"/>
</dbReference>
<dbReference type="GO" id="GO:0010333">
    <property type="term" value="F:terpene synthase activity"/>
    <property type="evidence" value="ECO:0000318"/>
    <property type="project" value="GO_Central"/>
</dbReference>
<dbReference type="GO" id="GO:0051762">
    <property type="term" value="P:sesquiterpene biosynthetic process"/>
    <property type="evidence" value="ECO:0000304"/>
    <property type="project" value="dictyBase"/>
</dbReference>
<dbReference type="FunFam" id="1.10.600.10:FF:000076">
    <property type="entry name" value="Terpene synthase"/>
    <property type="match status" value="1"/>
</dbReference>
<dbReference type="Gene3D" id="1.10.600.10">
    <property type="entry name" value="Farnesyl Diphosphate Synthase"/>
    <property type="match status" value="1"/>
</dbReference>
<dbReference type="InterPro" id="IPR008949">
    <property type="entry name" value="Isoprenoid_synthase_dom_sf"/>
</dbReference>
<dbReference type="InterPro" id="IPR034686">
    <property type="entry name" value="Terpene_cyclase-like_2"/>
</dbReference>
<dbReference type="PANTHER" id="PTHR35201">
    <property type="entry name" value="TERPENE SYNTHASE"/>
    <property type="match status" value="1"/>
</dbReference>
<dbReference type="PANTHER" id="PTHR35201:SF2">
    <property type="entry name" value="TERPENE SYNTHASE 1-RELATED"/>
    <property type="match status" value="1"/>
</dbReference>
<dbReference type="SUPFAM" id="SSF48576">
    <property type="entry name" value="Terpenoid synthases"/>
    <property type="match status" value="1"/>
</dbReference>
<evidence type="ECO:0000250" key="1">
    <source>
        <dbReference type="UniProtKB" id="Q54BE5"/>
    </source>
</evidence>
<evidence type="ECO:0000269" key="2">
    <source>
    </source>
</evidence>
<evidence type="ECO:0000303" key="3">
    <source>
    </source>
</evidence>
<evidence type="ECO:0000305" key="4"/>
<evidence type="ECO:0000305" key="5">
    <source>
    </source>
</evidence>
<proteinExistence type="evidence at protein level"/>
<protein>
    <recommendedName>
        <fullName evidence="3">Terpene synthase 7</fullName>
        <ecNumber evidence="2">4.2.3.-</ecNumber>
    </recommendedName>
</protein>
<organism>
    <name type="scientific">Dictyostelium discoideum</name>
    <name type="common">Social amoeba</name>
    <dbReference type="NCBI Taxonomy" id="44689"/>
    <lineage>
        <taxon>Eukaryota</taxon>
        <taxon>Amoebozoa</taxon>
        <taxon>Evosea</taxon>
        <taxon>Eumycetozoa</taxon>
        <taxon>Dictyostelia</taxon>
        <taxon>Dictyosteliales</taxon>
        <taxon>Dictyosteliaceae</taxon>
        <taxon>Dictyostelium</taxon>
    </lineage>
</organism>
<feature type="chain" id="PRO_0000456823" description="Terpene synthase 7">
    <location>
        <begin position="1"/>
        <end position="339"/>
    </location>
</feature>
<feature type="short sequence motif" description="DDxx(x)D/E motif" evidence="1">
    <location>
        <begin position="79"/>
        <end position="84"/>
    </location>
</feature>
<feature type="short sequence motif" description="NDxxSxxxD/E motif" evidence="1">
    <location>
        <begin position="219"/>
        <end position="227"/>
    </location>
</feature>
<reference key="1">
    <citation type="journal article" date="2016" name="Proc. Natl. Acad. Sci. U.S.A.">
        <title>Terpene synthase genes in eukaryotes beyond plants and fungi: Occurrence in social amoebae.</title>
        <authorList>
            <person name="Chen X."/>
            <person name="Koellner T.G."/>
            <person name="Jia Q."/>
            <person name="Norris A."/>
            <person name="Santhanam B."/>
            <person name="Rabe P."/>
            <person name="Dickschat J.S."/>
            <person name="Shaulsky G."/>
            <person name="Gershenzon J."/>
            <person name="Chen F."/>
        </authorList>
    </citation>
    <scope>NUCLEOTIDE SEQUENCE [MRNA]</scope>
    <scope>INDUCTION</scope>
    <scope>FUNCTION</scope>
    <scope>CATALYTIC ACTIVITY</scope>
    <scope>DOMAIN</scope>
    <source>
        <strain>AX4</strain>
    </source>
</reference>
<reference key="2">
    <citation type="journal article" date="2005" name="Nature">
        <title>The genome of the social amoeba Dictyostelium discoideum.</title>
        <authorList>
            <person name="Eichinger L."/>
            <person name="Pachebat J.A."/>
            <person name="Gloeckner G."/>
            <person name="Rajandream M.A."/>
            <person name="Sucgang R."/>
            <person name="Berriman M."/>
            <person name="Song J."/>
            <person name="Olsen R."/>
            <person name="Szafranski K."/>
            <person name="Xu Q."/>
            <person name="Tunggal B."/>
            <person name="Kummerfeld S."/>
            <person name="Madera M."/>
            <person name="Konfortov B.A."/>
            <person name="Rivero F."/>
            <person name="Bankier A.T."/>
            <person name="Lehmann R."/>
            <person name="Hamlin N."/>
            <person name="Davies R."/>
            <person name="Gaudet P."/>
            <person name="Fey P."/>
            <person name="Pilcher K."/>
            <person name="Chen G."/>
            <person name="Saunders D."/>
            <person name="Sodergren E.J."/>
            <person name="Davis P."/>
            <person name="Kerhornou A."/>
            <person name="Nie X."/>
            <person name="Hall N."/>
            <person name="Anjard C."/>
            <person name="Hemphill L."/>
            <person name="Bason N."/>
            <person name="Farbrother P."/>
            <person name="Desany B."/>
            <person name="Just E."/>
            <person name="Morio T."/>
            <person name="Rost R."/>
            <person name="Churcher C.M."/>
            <person name="Cooper J."/>
            <person name="Haydock S."/>
            <person name="van Driessche N."/>
            <person name="Cronin A."/>
            <person name="Goodhead I."/>
            <person name="Muzny D.M."/>
            <person name="Mourier T."/>
            <person name="Pain A."/>
            <person name="Lu M."/>
            <person name="Harper D."/>
            <person name="Lindsay R."/>
            <person name="Hauser H."/>
            <person name="James K.D."/>
            <person name="Quiles M."/>
            <person name="Madan Babu M."/>
            <person name="Saito T."/>
            <person name="Buchrieser C."/>
            <person name="Wardroper A."/>
            <person name="Felder M."/>
            <person name="Thangavelu M."/>
            <person name="Johnson D."/>
            <person name="Knights A."/>
            <person name="Loulseged H."/>
            <person name="Mungall K.L."/>
            <person name="Oliver K."/>
            <person name="Price C."/>
            <person name="Quail M.A."/>
            <person name="Urushihara H."/>
            <person name="Hernandez J."/>
            <person name="Rabbinowitsch E."/>
            <person name="Steffen D."/>
            <person name="Sanders M."/>
            <person name="Ma J."/>
            <person name="Kohara Y."/>
            <person name="Sharp S."/>
            <person name="Simmonds M.N."/>
            <person name="Spiegler S."/>
            <person name="Tivey A."/>
            <person name="Sugano S."/>
            <person name="White B."/>
            <person name="Walker D."/>
            <person name="Woodward J.R."/>
            <person name="Winckler T."/>
            <person name="Tanaka Y."/>
            <person name="Shaulsky G."/>
            <person name="Schleicher M."/>
            <person name="Weinstock G.M."/>
            <person name="Rosenthal A."/>
            <person name="Cox E.C."/>
            <person name="Chisholm R.L."/>
            <person name="Gibbs R.A."/>
            <person name="Loomis W.F."/>
            <person name="Platzer M."/>
            <person name="Kay R.R."/>
            <person name="Williams J.G."/>
            <person name="Dear P.H."/>
            <person name="Noegel A.A."/>
            <person name="Barrell B.G."/>
            <person name="Kuspa A."/>
        </authorList>
    </citation>
    <scope>NUCLEOTIDE SEQUENCE [LARGE SCALE GENOMIC DNA]</scope>
    <source>
        <strain>AX4</strain>
    </source>
</reference>
<accession>Q54YE1</accession>
<comment type="function">
    <text evidence="2">Terpene synthase that converts its substrate farnesyl diphosphate (FPP) into the sesquiterpene beta-barbatene.</text>
</comment>
<comment type="catalytic activity">
    <reaction evidence="2">
        <text>(2E,6E)-farnesyl diphosphate = (-)-beta-barbatene + diphosphate</text>
        <dbReference type="Rhea" id="RHEA:73983"/>
        <dbReference type="ChEBI" id="CHEBI:33019"/>
        <dbReference type="ChEBI" id="CHEBI:175763"/>
        <dbReference type="ChEBI" id="CHEBI:193072"/>
    </reaction>
    <physiologicalReaction direction="left-to-right" evidence="2">
        <dbReference type="Rhea" id="RHEA:73984"/>
    </physiologicalReaction>
</comment>
<comment type="induction">
    <text evidence="2">Expression is detectable but at low levels in vegetatively growing cells and increases during development induced by starvation (PubMed:27790999). Expression is highest during he ultimate stage of mature fruiting body (approximately 24 hours after induction) (PubMed:27790999).</text>
</comment>
<comment type="domain">
    <text evidence="5">Contains several highly conserved motifs that are important for catalytic activity including the aspartate-rich 'DDxx(x)D/E' motif and the 'NDxxSxxxD/E' motif, both of which are involved in complexing metal ions to coordinate the binding of the isoprenyl diphosphate substrate in the active site.</text>
</comment>
<comment type="similarity">
    <text evidence="4">Belongs to the terpene synthase family.</text>
</comment>
<keyword id="KW-0456">Lyase</keyword>
<keyword id="KW-0479">Metal-binding</keyword>
<sequence length="339" mass="39943">MYSIYDFKYPSDWIEPTADDKCIYDCYKEVINYKLLDENKQTFQYYYGTLSSTINFYPLCNYEQLVIACRFLTVGYLIDDFLESNLVDSETSNLMSKKIENILIDGEYLDQSNISNIEKYTMFFRGKARQFVGDKINIFNQFIKFFVEWINSINPFNKAINLNNYDSYNFFKKVNSGTYVTLSMAMLLNPNTKVDTNIWMNPRFERFVCNGAYQMSAFNDCASYAKEVRSNCHLTNPLYFLQKEIGSFDQVYKLILNFNNKIVNEICKDEELLLKECPDDQKDDLKYLTRSMKLILGGNYSWSLKCTRFNDIDSPFIEQRSINPDVIAYENIVDKIIKL</sequence>